<organism>
    <name type="scientific">Salmonella typhi</name>
    <dbReference type="NCBI Taxonomy" id="90370"/>
    <lineage>
        <taxon>Bacteria</taxon>
        <taxon>Pseudomonadati</taxon>
        <taxon>Pseudomonadota</taxon>
        <taxon>Gammaproteobacteria</taxon>
        <taxon>Enterobacterales</taxon>
        <taxon>Enterobacteriaceae</taxon>
        <taxon>Salmonella</taxon>
    </lineage>
</organism>
<gene>
    <name evidence="1" type="primary">cmoA</name>
    <name type="ordered locus">STY2113</name>
    <name type="ordered locus">t0972</name>
</gene>
<accession>Q8XFX8</accession>
<accession>Q7AMT0</accession>
<feature type="chain" id="PRO_0000314373" description="Carboxy-S-adenosyl-L-methionine synthase">
    <location>
        <begin position="1"/>
        <end position="247"/>
    </location>
</feature>
<feature type="binding site" evidence="1">
    <location>
        <position position="39"/>
    </location>
    <ligand>
        <name>S-adenosyl-L-methionine</name>
        <dbReference type="ChEBI" id="CHEBI:59789"/>
    </ligand>
</feature>
<feature type="binding site" evidence="1">
    <location>
        <begin position="64"/>
        <end position="66"/>
    </location>
    <ligand>
        <name>S-adenosyl-L-methionine</name>
        <dbReference type="ChEBI" id="CHEBI:59789"/>
    </ligand>
</feature>
<feature type="binding site" evidence="1">
    <location>
        <begin position="89"/>
        <end position="90"/>
    </location>
    <ligand>
        <name>S-adenosyl-L-methionine</name>
        <dbReference type="ChEBI" id="CHEBI:59789"/>
    </ligand>
</feature>
<feature type="binding site" evidence="1">
    <location>
        <begin position="117"/>
        <end position="118"/>
    </location>
    <ligand>
        <name>S-adenosyl-L-methionine</name>
        <dbReference type="ChEBI" id="CHEBI:59789"/>
    </ligand>
</feature>
<feature type="binding site" evidence="1">
    <location>
        <position position="132"/>
    </location>
    <ligand>
        <name>S-adenosyl-L-methionine</name>
        <dbReference type="ChEBI" id="CHEBI:59789"/>
    </ligand>
</feature>
<feature type="binding site" evidence="1">
    <location>
        <position position="199"/>
    </location>
    <ligand>
        <name>S-adenosyl-L-methionine</name>
        <dbReference type="ChEBI" id="CHEBI:59789"/>
    </ligand>
</feature>
<name>CMOA_SALTI</name>
<dbReference type="EC" id="2.1.3.-" evidence="1"/>
<dbReference type="EMBL" id="AL513382">
    <property type="protein sequence ID" value="CAD05656.1"/>
    <property type="molecule type" value="Genomic_DNA"/>
</dbReference>
<dbReference type="EMBL" id="AE014613">
    <property type="protein sequence ID" value="AAO68644.1"/>
    <property type="molecule type" value="Genomic_DNA"/>
</dbReference>
<dbReference type="RefSeq" id="NP_456472.1">
    <property type="nucleotide sequence ID" value="NC_003198.1"/>
</dbReference>
<dbReference type="RefSeq" id="WP_000019609.1">
    <property type="nucleotide sequence ID" value="NZ_WSUR01000004.1"/>
</dbReference>
<dbReference type="SMR" id="Q8XFX8"/>
<dbReference type="STRING" id="220341.gene:17586021"/>
<dbReference type="KEGG" id="stt:t0972"/>
<dbReference type="KEGG" id="sty:STY2113"/>
<dbReference type="PATRIC" id="fig|220341.7.peg.2123"/>
<dbReference type="eggNOG" id="COG4106">
    <property type="taxonomic scope" value="Bacteria"/>
</dbReference>
<dbReference type="HOGENOM" id="CLU_078475_0_0_6"/>
<dbReference type="OMA" id="QMIELYY"/>
<dbReference type="OrthoDB" id="9779941at2"/>
<dbReference type="Proteomes" id="UP000000541">
    <property type="component" value="Chromosome"/>
</dbReference>
<dbReference type="Proteomes" id="UP000002670">
    <property type="component" value="Chromosome"/>
</dbReference>
<dbReference type="GO" id="GO:0016743">
    <property type="term" value="F:carboxyl- or carbamoyltransferase activity"/>
    <property type="evidence" value="ECO:0007669"/>
    <property type="project" value="UniProtKB-UniRule"/>
</dbReference>
<dbReference type="GO" id="GO:1904047">
    <property type="term" value="F:S-adenosyl-L-methionine binding"/>
    <property type="evidence" value="ECO:0007669"/>
    <property type="project" value="UniProtKB-UniRule"/>
</dbReference>
<dbReference type="GO" id="GO:0002098">
    <property type="term" value="P:tRNA wobble uridine modification"/>
    <property type="evidence" value="ECO:0007669"/>
    <property type="project" value="InterPro"/>
</dbReference>
<dbReference type="CDD" id="cd02440">
    <property type="entry name" value="AdoMet_MTases"/>
    <property type="match status" value="1"/>
</dbReference>
<dbReference type="FunFam" id="3.40.50.150:FF:000030">
    <property type="entry name" value="Carboxy-S-adenosyl-L-methionine synthase"/>
    <property type="match status" value="1"/>
</dbReference>
<dbReference type="Gene3D" id="3.40.50.150">
    <property type="entry name" value="Vaccinia Virus protein VP39"/>
    <property type="match status" value="1"/>
</dbReference>
<dbReference type="HAMAP" id="MF_01589">
    <property type="entry name" value="Cx_SAM_synthase"/>
    <property type="match status" value="1"/>
</dbReference>
<dbReference type="InterPro" id="IPR005271">
    <property type="entry name" value="CmoA"/>
</dbReference>
<dbReference type="InterPro" id="IPR041698">
    <property type="entry name" value="Methyltransf_25"/>
</dbReference>
<dbReference type="InterPro" id="IPR029063">
    <property type="entry name" value="SAM-dependent_MTases_sf"/>
</dbReference>
<dbReference type="NCBIfam" id="TIGR00740">
    <property type="entry name" value="carboxy-S-adenosyl-L-methionine synthase CmoA"/>
    <property type="match status" value="1"/>
</dbReference>
<dbReference type="NCBIfam" id="NF011995">
    <property type="entry name" value="PRK15451.1"/>
    <property type="match status" value="1"/>
</dbReference>
<dbReference type="PANTHER" id="PTHR43861:SF2">
    <property type="entry name" value="CARBOXY-S-ADENOSYL-L-METHIONINE SYNTHASE"/>
    <property type="match status" value="1"/>
</dbReference>
<dbReference type="PANTHER" id="PTHR43861">
    <property type="entry name" value="TRANS-ACONITATE 2-METHYLTRANSFERASE-RELATED"/>
    <property type="match status" value="1"/>
</dbReference>
<dbReference type="Pfam" id="PF13649">
    <property type="entry name" value="Methyltransf_25"/>
    <property type="match status" value="1"/>
</dbReference>
<dbReference type="PIRSF" id="PIRSF006325">
    <property type="entry name" value="MeTrfase_bac"/>
    <property type="match status" value="1"/>
</dbReference>
<dbReference type="SUPFAM" id="SSF53335">
    <property type="entry name" value="S-adenosyl-L-methionine-dependent methyltransferases"/>
    <property type="match status" value="1"/>
</dbReference>
<comment type="function">
    <text evidence="1">Catalyzes the conversion of S-adenosyl-L-methionine (SAM) to carboxy-S-adenosyl-L-methionine (Cx-SAM).</text>
</comment>
<comment type="catalytic activity">
    <reaction evidence="1">
        <text>prephenate + S-adenosyl-L-methionine = carboxy-S-adenosyl-L-methionine + 3-phenylpyruvate + H2O</text>
        <dbReference type="Rhea" id="RHEA:51692"/>
        <dbReference type="ChEBI" id="CHEBI:15377"/>
        <dbReference type="ChEBI" id="CHEBI:18005"/>
        <dbReference type="ChEBI" id="CHEBI:29934"/>
        <dbReference type="ChEBI" id="CHEBI:59789"/>
        <dbReference type="ChEBI" id="CHEBI:134278"/>
    </reaction>
</comment>
<comment type="subunit">
    <text evidence="1">Homodimer.</text>
</comment>
<comment type="similarity">
    <text evidence="1">Belongs to the class I-like SAM-binding methyltransferase superfamily. Cx-SAM synthase family.</text>
</comment>
<keyword id="KW-0949">S-adenosyl-L-methionine</keyword>
<keyword id="KW-0808">Transferase</keyword>
<evidence type="ECO:0000255" key="1">
    <source>
        <dbReference type="HAMAP-Rule" id="MF_01589"/>
    </source>
</evidence>
<sequence>MSHRDTLFSAPIARLGDWTFDERVAEVFPDMIQRSVPGYSNIISMIGMLAERFVQPNTQVYDLGCSLGAATLSVRRNIRHEHCRIIAVDNSPAMIERCRRHIDAYKAPTPVEVVEGDIRDITIENASMVVLNFTLQFLEPAERQALLDKIYLGLNPGGALVLSEKFSFEDAKVGELLFNMHHDFKRANGYSELEISQKRSMLENVMLTDSVETHKARLRQAGFEHSELWFQCFNFGSLVALKAGVAA</sequence>
<reference key="1">
    <citation type="journal article" date="2001" name="Nature">
        <title>Complete genome sequence of a multiple drug resistant Salmonella enterica serovar Typhi CT18.</title>
        <authorList>
            <person name="Parkhill J."/>
            <person name="Dougan G."/>
            <person name="James K.D."/>
            <person name="Thomson N.R."/>
            <person name="Pickard D."/>
            <person name="Wain J."/>
            <person name="Churcher C.M."/>
            <person name="Mungall K.L."/>
            <person name="Bentley S.D."/>
            <person name="Holden M.T.G."/>
            <person name="Sebaihia M."/>
            <person name="Baker S."/>
            <person name="Basham D."/>
            <person name="Brooks K."/>
            <person name="Chillingworth T."/>
            <person name="Connerton P."/>
            <person name="Cronin A."/>
            <person name="Davis P."/>
            <person name="Davies R.M."/>
            <person name="Dowd L."/>
            <person name="White N."/>
            <person name="Farrar J."/>
            <person name="Feltwell T."/>
            <person name="Hamlin N."/>
            <person name="Haque A."/>
            <person name="Hien T.T."/>
            <person name="Holroyd S."/>
            <person name="Jagels K."/>
            <person name="Krogh A."/>
            <person name="Larsen T.S."/>
            <person name="Leather S."/>
            <person name="Moule S."/>
            <person name="O'Gaora P."/>
            <person name="Parry C."/>
            <person name="Quail M.A."/>
            <person name="Rutherford K.M."/>
            <person name="Simmonds M."/>
            <person name="Skelton J."/>
            <person name="Stevens K."/>
            <person name="Whitehead S."/>
            <person name="Barrell B.G."/>
        </authorList>
    </citation>
    <scope>NUCLEOTIDE SEQUENCE [LARGE SCALE GENOMIC DNA]</scope>
    <source>
        <strain>CT18</strain>
    </source>
</reference>
<reference key="2">
    <citation type="journal article" date="2003" name="J. Bacteriol.">
        <title>Comparative genomics of Salmonella enterica serovar Typhi strains Ty2 and CT18.</title>
        <authorList>
            <person name="Deng W."/>
            <person name="Liou S.-R."/>
            <person name="Plunkett G. III"/>
            <person name="Mayhew G.F."/>
            <person name="Rose D.J."/>
            <person name="Burland V."/>
            <person name="Kodoyianni V."/>
            <person name="Schwartz D.C."/>
            <person name="Blattner F.R."/>
        </authorList>
    </citation>
    <scope>NUCLEOTIDE SEQUENCE [LARGE SCALE GENOMIC DNA]</scope>
    <source>
        <strain>ATCC 700931 / Ty2</strain>
    </source>
</reference>
<protein>
    <recommendedName>
        <fullName evidence="1">Carboxy-S-adenosyl-L-methionine synthase</fullName>
        <shortName evidence="1">Cx-SAM synthase</shortName>
        <ecNumber evidence="1">2.1.3.-</ecNumber>
    </recommendedName>
</protein>
<proteinExistence type="inferred from homology"/>